<proteinExistence type="inferred from homology"/>
<gene>
    <name evidence="1" type="primary">mat</name>
    <name type="ordered locus">Msm_1340</name>
</gene>
<sequence length="401" mass="43784">MRNIIVKELNQTYIEDIDIEIVERKGIGHPDSISDGIGETVSEALCKMYMDELGGVLHHNTDEVQITAGESNPVFGGGKILKPIDILLTGRGVSEYDGIKFPLDRVAIEAAKNFLDDTIINLDVELDTVVECKIGHGSGDLVDVFKREGAPSSNDTSFGVGYAPFSETETLVKATEELLNSKPFKAKHPAVGEDIKVMGLREGEKITLTIGCAMVSKFVANREEYIAVREELKDIVSDLATKYTNREVEVFVNTADNDDATDESGYYLTVTGTSAEMGDDGSVGRGNRANGLITPCRPMSMEASSGKNPINHVGKIYNILSNEIAKDVVENVEGIKQMNVMILSQIGKPIDQPKAASTQVILEDGVKLEDVDKKVEQIVDRWLEDISIITENVVQGKTRTF</sequence>
<reference key="1">
    <citation type="journal article" date="2007" name="Proc. Natl. Acad. Sci. U.S.A.">
        <title>Genomic and metabolic adaptations of Methanobrevibacter smithii to the human gut.</title>
        <authorList>
            <person name="Samuel B.S."/>
            <person name="Hansen E.E."/>
            <person name="Manchester J.K."/>
            <person name="Coutinho P.M."/>
            <person name="Henrissat B."/>
            <person name="Fulton R."/>
            <person name="Latreille P."/>
            <person name="Kim K."/>
            <person name="Wilson R.K."/>
            <person name="Gordon J.I."/>
        </authorList>
    </citation>
    <scope>NUCLEOTIDE SEQUENCE [LARGE SCALE GENOMIC DNA]</scope>
    <source>
        <strain>ATCC 35061 / DSM 861 / OCM 144 / PS</strain>
    </source>
</reference>
<name>METK_METS3</name>
<accession>A5UMW7</accession>
<comment type="function">
    <text evidence="1">Catalyzes the formation of S-adenosylmethionine from methionine and ATP.</text>
</comment>
<comment type="catalytic activity">
    <reaction evidence="1">
        <text>L-methionine + ATP + H2O = S-adenosyl-L-methionine + phosphate + diphosphate</text>
        <dbReference type="Rhea" id="RHEA:21080"/>
        <dbReference type="ChEBI" id="CHEBI:15377"/>
        <dbReference type="ChEBI" id="CHEBI:30616"/>
        <dbReference type="ChEBI" id="CHEBI:33019"/>
        <dbReference type="ChEBI" id="CHEBI:43474"/>
        <dbReference type="ChEBI" id="CHEBI:57844"/>
        <dbReference type="ChEBI" id="CHEBI:59789"/>
        <dbReference type="EC" id="2.5.1.6"/>
    </reaction>
</comment>
<comment type="cofactor">
    <cofactor evidence="1">
        <name>Mg(2+)</name>
        <dbReference type="ChEBI" id="CHEBI:18420"/>
    </cofactor>
</comment>
<comment type="pathway">
    <text evidence="1">Amino-acid biosynthesis; S-adenosyl-L-methionine biosynthesis; S-adenosyl-L-methionine from L-methionine: step 1/1.</text>
</comment>
<comment type="similarity">
    <text evidence="1">Belongs to the AdoMet synthase 2 family.</text>
</comment>
<organism>
    <name type="scientific">Methanobrevibacter smithii (strain ATCC 35061 / DSM 861 / OCM 144 / PS)</name>
    <dbReference type="NCBI Taxonomy" id="420247"/>
    <lineage>
        <taxon>Archaea</taxon>
        <taxon>Methanobacteriati</taxon>
        <taxon>Methanobacteriota</taxon>
        <taxon>Methanomada group</taxon>
        <taxon>Methanobacteria</taxon>
        <taxon>Methanobacteriales</taxon>
        <taxon>Methanobacteriaceae</taxon>
        <taxon>Methanobrevibacter</taxon>
    </lineage>
</organism>
<dbReference type="EC" id="2.5.1.6" evidence="1"/>
<dbReference type="EMBL" id="CP000678">
    <property type="protein sequence ID" value="ABQ87545.1"/>
    <property type="molecule type" value="Genomic_DNA"/>
</dbReference>
<dbReference type="RefSeq" id="WP_004032572.1">
    <property type="nucleotide sequence ID" value="NZ_CP117965.1"/>
</dbReference>
<dbReference type="SMR" id="A5UMW7"/>
<dbReference type="STRING" id="420247.Msm_1340"/>
<dbReference type="EnsemblBacteria" id="ABQ87545">
    <property type="protein sequence ID" value="ABQ87545"/>
    <property type="gene ID" value="Msm_1340"/>
</dbReference>
<dbReference type="KEGG" id="msi:Msm_1340"/>
<dbReference type="PATRIC" id="fig|420247.28.peg.1335"/>
<dbReference type="eggNOG" id="arCOG01678">
    <property type="taxonomic scope" value="Archaea"/>
</dbReference>
<dbReference type="HOGENOM" id="CLU_057642_0_0_2"/>
<dbReference type="UniPathway" id="UPA00315">
    <property type="reaction ID" value="UER00080"/>
</dbReference>
<dbReference type="Proteomes" id="UP000001992">
    <property type="component" value="Chromosome"/>
</dbReference>
<dbReference type="GO" id="GO:0005524">
    <property type="term" value="F:ATP binding"/>
    <property type="evidence" value="ECO:0007669"/>
    <property type="project" value="UniProtKB-UniRule"/>
</dbReference>
<dbReference type="GO" id="GO:0000287">
    <property type="term" value="F:magnesium ion binding"/>
    <property type="evidence" value="ECO:0007669"/>
    <property type="project" value="UniProtKB-UniRule"/>
</dbReference>
<dbReference type="GO" id="GO:0004478">
    <property type="term" value="F:methionine adenosyltransferase activity"/>
    <property type="evidence" value="ECO:0007669"/>
    <property type="project" value="UniProtKB-UniRule"/>
</dbReference>
<dbReference type="GO" id="GO:0006730">
    <property type="term" value="P:one-carbon metabolic process"/>
    <property type="evidence" value="ECO:0007669"/>
    <property type="project" value="UniProtKB-KW"/>
</dbReference>
<dbReference type="GO" id="GO:0006556">
    <property type="term" value="P:S-adenosylmethionine biosynthetic process"/>
    <property type="evidence" value="ECO:0007669"/>
    <property type="project" value="UniProtKB-UniRule"/>
</dbReference>
<dbReference type="Gene3D" id="3.30.300.10">
    <property type="match status" value="1"/>
</dbReference>
<dbReference type="Gene3D" id="3.30.300.280">
    <property type="entry name" value="S-adenosylmethionine synthetase, C-terminal domain"/>
    <property type="match status" value="2"/>
</dbReference>
<dbReference type="HAMAP" id="MF_00136">
    <property type="entry name" value="S_AdoMet_synth2"/>
    <property type="match status" value="1"/>
</dbReference>
<dbReference type="InterPro" id="IPR027790">
    <property type="entry name" value="AdoMet_synthase_2_family"/>
</dbReference>
<dbReference type="InterPro" id="IPR042544">
    <property type="entry name" value="AdoMet_synthase_3"/>
</dbReference>
<dbReference type="InterPro" id="IPR002795">
    <property type="entry name" value="S-AdoMet_synthetase_arc"/>
</dbReference>
<dbReference type="NCBIfam" id="NF003364">
    <property type="entry name" value="PRK04439.1-3"/>
    <property type="match status" value="1"/>
</dbReference>
<dbReference type="NCBIfam" id="NF003366">
    <property type="entry name" value="PRK04439.1-5"/>
    <property type="match status" value="1"/>
</dbReference>
<dbReference type="PANTHER" id="PTHR36697">
    <property type="entry name" value="S-ADENOSYLMETHIONINE SYNTHASE"/>
    <property type="match status" value="1"/>
</dbReference>
<dbReference type="PANTHER" id="PTHR36697:SF1">
    <property type="entry name" value="S-ADENOSYLMETHIONINE SYNTHASE"/>
    <property type="match status" value="1"/>
</dbReference>
<dbReference type="Pfam" id="PF01941">
    <property type="entry name" value="AdoMet_Synthase"/>
    <property type="match status" value="1"/>
</dbReference>
<feature type="chain" id="PRO_1000196739" description="S-adenosylmethionine synthase">
    <location>
        <begin position="1"/>
        <end position="401"/>
    </location>
</feature>
<feature type="binding site" evidence="1">
    <location>
        <begin position="135"/>
        <end position="140"/>
    </location>
    <ligand>
        <name>ATP</name>
        <dbReference type="ChEBI" id="CHEBI:30616"/>
    </ligand>
</feature>
<protein>
    <recommendedName>
        <fullName evidence="1">S-adenosylmethionine synthase</fullName>
        <shortName evidence="1">AdoMet synthase</shortName>
        <ecNumber evidence="1">2.5.1.6</ecNumber>
    </recommendedName>
    <alternativeName>
        <fullName evidence="1">Methionine adenosyltransferase</fullName>
    </alternativeName>
</protein>
<keyword id="KW-0067">ATP-binding</keyword>
<keyword id="KW-0460">Magnesium</keyword>
<keyword id="KW-0547">Nucleotide-binding</keyword>
<keyword id="KW-0554">One-carbon metabolism</keyword>
<keyword id="KW-0808">Transferase</keyword>
<evidence type="ECO:0000255" key="1">
    <source>
        <dbReference type="HAMAP-Rule" id="MF_00136"/>
    </source>
</evidence>